<name>T151A_MOUSE</name>
<protein>
    <recommendedName>
        <fullName>Transmembrane protein 151A</fullName>
    </recommendedName>
</protein>
<gene>
    <name type="primary">Tmem151a</name>
    <name type="synonym">Gm961</name>
    <name type="synonym">Tmem151</name>
</gene>
<sequence>MPEGEGGDCGEVPALVPDGEPLREEQRPLKQSLGGSLCRESHWKCLLLTLLIHACGAVVAWCRLATVPRLVLGPEAALARGAGGPPPTYPASPCSDGYLYIPLAFVSLLYLLYLAECWHCHVRSCQAPRTDANTVLALIHRLQQAPPCVWWKATSYHYVRRTRQITRYRNGDAYTTTQVYHERADSRTARGEFDYSAHGVRDVSKELVGLADHAATRLRFTKCFSFGSAEAEASYLTQRARFFSANEGLDDYLEAREGMHLKDVDFRESLMVFADPRSPPWYARAWVFWLVSAATLSWPLRVVAAYGTAHVHYQVEKLFGASSPPPGAVPSGPPLSRVATVDFTELEWHICSNRQLVPSYSEAVVMGASSGAYLRGCQRCRRSVSSNSLPPARPSGPRLPFSRSRLSLGAGGRTTPGVFRSLSGGPLGRRGEDTEPLESPPCYEDALYFPVLIVHGDSGCRGDGQGAL</sequence>
<reference key="1">
    <citation type="journal article" date="2005" name="Science">
        <title>The transcriptional landscape of the mammalian genome.</title>
        <authorList>
            <person name="Carninci P."/>
            <person name="Kasukawa T."/>
            <person name="Katayama S."/>
            <person name="Gough J."/>
            <person name="Frith M.C."/>
            <person name="Maeda N."/>
            <person name="Oyama R."/>
            <person name="Ravasi T."/>
            <person name="Lenhard B."/>
            <person name="Wells C."/>
            <person name="Kodzius R."/>
            <person name="Shimokawa K."/>
            <person name="Bajic V.B."/>
            <person name="Brenner S.E."/>
            <person name="Batalov S."/>
            <person name="Forrest A.R."/>
            <person name="Zavolan M."/>
            <person name="Davis M.J."/>
            <person name="Wilming L.G."/>
            <person name="Aidinis V."/>
            <person name="Allen J.E."/>
            <person name="Ambesi-Impiombato A."/>
            <person name="Apweiler R."/>
            <person name="Aturaliya R.N."/>
            <person name="Bailey T.L."/>
            <person name="Bansal M."/>
            <person name="Baxter L."/>
            <person name="Beisel K.W."/>
            <person name="Bersano T."/>
            <person name="Bono H."/>
            <person name="Chalk A.M."/>
            <person name="Chiu K.P."/>
            <person name="Choudhary V."/>
            <person name="Christoffels A."/>
            <person name="Clutterbuck D.R."/>
            <person name="Crowe M.L."/>
            <person name="Dalla E."/>
            <person name="Dalrymple B.P."/>
            <person name="de Bono B."/>
            <person name="Della Gatta G."/>
            <person name="di Bernardo D."/>
            <person name="Down T."/>
            <person name="Engstrom P."/>
            <person name="Fagiolini M."/>
            <person name="Faulkner G."/>
            <person name="Fletcher C.F."/>
            <person name="Fukushima T."/>
            <person name="Furuno M."/>
            <person name="Futaki S."/>
            <person name="Gariboldi M."/>
            <person name="Georgii-Hemming P."/>
            <person name="Gingeras T.R."/>
            <person name="Gojobori T."/>
            <person name="Green R.E."/>
            <person name="Gustincich S."/>
            <person name="Harbers M."/>
            <person name="Hayashi Y."/>
            <person name="Hensch T.K."/>
            <person name="Hirokawa N."/>
            <person name="Hill D."/>
            <person name="Huminiecki L."/>
            <person name="Iacono M."/>
            <person name="Ikeo K."/>
            <person name="Iwama A."/>
            <person name="Ishikawa T."/>
            <person name="Jakt M."/>
            <person name="Kanapin A."/>
            <person name="Katoh M."/>
            <person name="Kawasawa Y."/>
            <person name="Kelso J."/>
            <person name="Kitamura H."/>
            <person name="Kitano H."/>
            <person name="Kollias G."/>
            <person name="Krishnan S.P."/>
            <person name="Kruger A."/>
            <person name="Kummerfeld S.K."/>
            <person name="Kurochkin I.V."/>
            <person name="Lareau L.F."/>
            <person name="Lazarevic D."/>
            <person name="Lipovich L."/>
            <person name="Liu J."/>
            <person name="Liuni S."/>
            <person name="McWilliam S."/>
            <person name="Madan Babu M."/>
            <person name="Madera M."/>
            <person name="Marchionni L."/>
            <person name="Matsuda H."/>
            <person name="Matsuzawa S."/>
            <person name="Miki H."/>
            <person name="Mignone F."/>
            <person name="Miyake S."/>
            <person name="Morris K."/>
            <person name="Mottagui-Tabar S."/>
            <person name="Mulder N."/>
            <person name="Nakano N."/>
            <person name="Nakauchi H."/>
            <person name="Ng P."/>
            <person name="Nilsson R."/>
            <person name="Nishiguchi S."/>
            <person name="Nishikawa S."/>
            <person name="Nori F."/>
            <person name="Ohara O."/>
            <person name="Okazaki Y."/>
            <person name="Orlando V."/>
            <person name="Pang K.C."/>
            <person name="Pavan W.J."/>
            <person name="Pavesi G."/>
            <person name="Pesole G."/>
            <person name="Petrovsky N."/>
            <person name="Piazza S."/>
            <person name="Reed J."/>
            <person name="Reid J.F."/>
            <person name="Ring B.Z."/>
            <person name="Ringwald M."/>
            <person name="Rost B."/>
            <person name="Ruan Y."/>
            <person name="Salzberg S.L."/>
            <person name="Sandelin A."/>
            <person name="Schneider C."/>
            <person name="Schoenbach C."/>
            <person name="Sekiguchi K."/>
            <person name="Semple C.A."/>
            <person name="Seno S."/>
            <person name="Sessa L."/>
            <person name="Sheng Y."/>
            <person name="Shibata Y."/>
            <person name="Shimada H."/>
            <person name="Shimada K."/>
            <person name="Silva D."/>
            <person name="Sinclair B."/>
            <person name="Sperling S."/>
            <person name="Stupka E."/>
            <person name="Sugiura K."/>
            <person name="Sultana R."/>
            <person name="Takenaka Y."/>
            <person name="Taki K."/>
            <person name="Tammoja K."/>
            <person name="Tan S.L."/>
            <person name="Tang S."/>
            <person name="Taylor M.S."/>
            <person name="Tegner J."/>
            <person name="Teichmann S.A."/>
            <person name="Ueda H.R."/>
            <person name="van Nimwegen E."/>
            <person name="Verardo R."/>
            <person name="Wei C.L."/>
            <person name="Yagi K."/>
            <person name="Yamanishi H."/>
            <person name="Zabarovsky E."/>
            <person name="Zhu S."/>
            <person name="Zimmer A."/>
            <person name="Hide W."/>
            <person name="Bult C."/>
            <person name="Grimmond S.M."/>
            <person name="Teasdale R.D."/>
            <person name="Liu E.T."/>
            <person name="Brusic V."/>
            <person name="Quackenbush J."/>
            <person name="Wahlestedt C."/>
            <person name="Mattick J.S."/>
            <person name="Hume D.A."/>
            <person name="Kai C."/>
            <person name="Sasaki D."/>
            <person name="Tomaru Y."/>
            <person name="Fukuda S."/>
            <person name="Kanamori-Katayama M."/>
            <person name="Suzuki M."/>
            <person name="Aoki J."/>
            <person name="Arakawa T."/>
            <person name="Iida J."/>
            <person name="Imamura K."/>
            <person name="Itoh M."/>
            <person name="Kato T."/>
            <person name="Kawaji H."/>
            <person name="Kawagashira N."/>
            <person name="Kawashima T."/>
            <person name="Kojima M."/>
            <person name="Kondo S."/>
            <person name="Konno H."/>
            <person name="Nakano K."/>
            <person name="Ninomiya N."/>
            <person name="Nishio T."/>
            <person name="Okada M."/>
            <person name="Plessy C."/>
            <person name="Shibata K."/>
            <person name="Shiraki T."/>
            <person name="Suzuki S."/>
            <person name="Tagami M."/>
            <person name="Waki K."/>
            <person name="Watahiki A."/>
            <person name="Okamura-Oho Y."/>
            <person name="Suzuki H."/>
            <person name="Kawai J."/>
            <person name="Hayashizaki Y."/>
        </authorList>
    </citation>
    <scope>NUCLEOTIDE SEQUENCE [LARGE SCALE MRNA]</scope>
    <source>
        <strain>C57BL/6J</strain>
        <tissue>Medulla oblongata</tissue>
    </source>
</reference>
<reference key="2">
    <citation type="journal article" date="2004" name="Genome Res.">
        <title>The status, quality, and expansion of the NIH full-length cDNA project: the Mammalian Gene Collection (MGC).</title>
        <authorList>
            <consortium name="The MGC Project Team"/>
        </authorList>
    </citation>
    <scope>NUCLEOTIDE SEQUENCE [LARGE SCALE MRNA]</scope>
    <source>
        <strain>C57BL/6J</strain>
        <tissue>Brain</tissue>
    </source>
</reference>
<reference key="3">
    <citation type="submission" date="2009-01" db="UniProtKB">
        <authorList>
            <person name="Lubec G."/>
            <person name="Sunyer B."/>
            <person name="Chen W.-Q."/>
        </authorList>
    </citation>
    <scope>PROTEIN SEQUENCE OF 404-413</scope>
    <scope>IDENTIFICATION BY MASS SPECTROMETRY</scope>
    <source>
        <strain>OF1</strain>
        <tissue>Hippocampus</tissue>
    </source>
</reference>
<reference key="4">
    <citation type="journal article" date="2021" name="Cell Discov.">
        <title>TMEM151A variants cause paroxysmal kinesigenic dyskinesia.</title>
        <authorList>
            <person name="Li H.F."/>
            <person name="Chen Y.L."/>
            <person name="Zhuang L."/>
            <person name="Chen D.F."/>
            <person name="Ke H.Z."/>
            <person name="Luo W.J."/>
            <person name="Liu G.L."/>
            <person name="Wu S.N."/>
            <person name="Zhou W.H."/>
            <person name="Xiong Z.Q."/>
            <person name="Wu Z.Y."/>
        </authorList>
    </citation>
    <scope>DISRUPTION PHENOTYPE</scope>
    <scope>TISSUE SPECIFICITY</scope>
    <scope>SUBCELLULAR LOCATION</scope>
</reference>
<reference key="5">
    <citation type="journal article" date="2021" name="Cell Discov.">
        <title>Author Correction: TMEM151A variants cause paroxysmal kinesigenic dyskinesia.</title>
        <authorList>
            <person name="Li H.F."/>
            <person name="Chen Y.L."/>
            <person name="Zhuang L."/>
            <person name="Chen D.F."/>
            <person name="Ke H.Z."/>
            <person name="Luo W.J."/>
            <person name="Liu G.L."/>
            <person name="Wu S.N."/>
            <person name="Zhou W.H."/>
            <person name="Xiong Z.Q."/>
            <person name="Wu Z.Y."/>
        </authorList>
    </citation>
    <scope>ERRATUM OF PUBMED:34518509</scope>
</reference>
<dbReference type="EMBL" id="AK163651">
    <property type="protein sequence ID" value="BAE37438.1"/>
    <property type="molecule type" value="mRNA"/>
</dbReference>
<dbReference type="EMBL" id="BC072634">
    <property type="protein sequence ID" value="AAH72634.1"/>
    <property type="molecule type" value="mRNA"/>
</dbReference>
<dbReference type="CCDS" id="CCDS29449.1"/>
<dbReference type="RefSeq" id="NP_001001885.1">
    <property type="nucleotide sequence ID" value="NM_001001885.2"/>
</dbReference>
<dbReference type="SMR" id="Q6GQT5"/>
<dbReference type="FunCoup" id="Q6GQT5">
    <property type="interactions" value="1"/>
</dbReference>
<dbReference type="STRING" id="10090.ENSMUSP00000076321"/>
<dbReference type="iPTMnet" id="Q6GQT5"/>
<dbReference type="PhosphoSitePlus" id="Q6GQT5"/>
<dbReference type="SwissPalm" id="Q6GQT5"/>
<dbReference type="PaxDb" id="10090-ENSMUSP00000076321"/>
<dbReference type="PeptideAtlas" id="Q6GQT5"/>
<dbReference type="ProteomicsDB" id="254523"/>
<dbReference type="Antibodypedia" id="52254">
    <property type="antibodies" value="19 antibodies from 10 providers"/>
</dbReference>
<dbReference type="DNASU" id="381199"/>
<dbReference type="Ensembl" id="ENSMUST00000077066.8">
    <property type="protein sequence ID" value="ENSMUSP00000076321.8"/>
    <property type="gene ID" value="ENSMUSG00000061451.14"/>
</dbReference>
<dbReference type="GeneID" id="381199"/>
<dbReference type="KEGG" id="mmu:381199"/>
<dbReference type="UCSC" id="uc008gcc.1">
    <property type="organism name" value="mouse"/>
</dbReference>
<dbReference type="AGR" id="MGI:2147713"/>
<dbReference type="CTD" id="256472"/>
<dbReference type="MGI" id="MGI:2147713">
    <property type="gene designation" value="Tmem151a"/>
</dbReference>
<dbReference type="VEuPathDB" id="HostDB:ENSMUSG00000061451"/>
<dbReference type="eggNOG" id="ENOG502QSYQ">
    <property type="taxonomic scope" value="Eukaryota"/>
</dbReference>
<dbReference type="GeneTree" id="ENSGT00390000013762"/>
<dbReference type="HOGENOM" id="CLU_023650_2_0_1"/>
<dbReference type="InParanoid" id="Q6GQT5"/>
<dbReference type="OMA" id="IHSCGAV"/>
<dbReference type="OrthoDB" id="190434at2759"/>
<dbReference type="PhylomeDB" id="Q6GQT5"/>
<dbReference type="TreeFam" id="TF315223"/>
<dbReference type="BioGRID-ORCS" id="381199">
    <property type="hits" value="1 hit in 76 CRISPR screens"/>
</dbReference>
<dbReference type="ChiTaRS" id="Tmem151a">
    <property type="organism name" value="mouse"/>
</dbReference>
<dbReference type="PRO" id="PR:Q6GQT5"/>
<dbReference type="Proteomes" id="UP000000589">
    <property type="component" value="Chromosome 19"/>
</dbReference>
<dbReference type="RNAct" id="Q6GQT5">
    <property type="molecule type" value="protein"/>
</dbReference>
<dbReference type="Bgee" id="ENSMUSG00000061451">
    <property type="expression patterns" value="Expressed in primary visual cortex and 131 other cell types or tissues"/>
</dbReference>
<dbReference type="ExpressionAtlas" id="Q6GQT5">
    <property type="expression patterns" value="baseline and differential"/>
</dbReference>
<dbReference type="GO" id="GO:0030424">
    <property type="term" value="C:axon"/>
    <property type="evidence" value="ECO:0007669"/>
    <property type="project" value="UniProtKB-SubCell"/>
</dbReference>
<dbReference type="GO" id="GO:0030425">
    <property type="term" value="C:dendrite"/>
    <property type="evidence" value="ECO:0007669"/>
    <property type="project" value="UniProtKB-SubCell"/>
</dbReference>
<dbReference type="GO" id="GO:0005783">
    <property type="term" value="C:endoplasmic reticulum"/>
    <property type="evidence" value="ECO:0000250"/>
    <property type="project" value="UniProtKB"/>
</dbReference>
<dbReference type="GO" id="GO:0005789">
    <property type="term" value="C:endoplasmic reticulum membrane"/>
    <property type="evidence" value="ECO:0007669"/>
    <property type="project" value="UniProtKB-SubCell"/>
</dbReference>
<dbReference type="GO" id="GO:0016020">
    <property type="term" value="C:membrane"/>
    <property type="evidence" value="ECO:0000250"/>
    <property type="project" value="UniProtKB"/>
</dbReference>
<dbReference type="GO" id="GO:0030315">
    <property type="term" value="C:T-tubule"/>
    <property type="evidence" value="ECO:0000250"/>
    <property type="project" value="UniProtKB"/>
</dbReference>
<dbReference type="InterPro" id="IPR026767">
    <property type="entry name" value="Tmem151"/>
</dbReference>
<dbReference type="PANTHER" id="PTHR31893">
    <property type="entry name" value="TRANSMEMBRANE PROTEIN 151 HOMOLOG"/>
    <property type="match status" value="1"/>
</dbReference>
<dbReference type="PANTHER" id="PTHR31893:SF3">
    <property type="entry name" value="TRANSMEMBRANE PROTEIN 151A"/>
    <property type="match status" value="1"/>
</dbReference>
<dbReference type="Pfam" id="PF14857">
    <property type="entry name" value="TMEM151"/>
    <property type="match status" value="1"/>
</dbReference>
<proteinExistence type="evidence at protein level"/>
<evidence type="ECO:0000255" key="1"/>
<evidence type="ECO:0000256" key="2">
    <source>
        <dbReference type="SAM" id="MobiDB-lite"/>
    </source>
</evidence>
<evidence type="ECO:0000269" key="3">
    <source>
    </source>
</evidence>
<evidence type="ECO:0000305" key="4"/>
<organism>
    <name type="scientific">Mus musculus</name>
    <name type="common">Mouse</name>
    <dbReference type="NCBI Taxonomy" id="10090"/>
    <lineage>
        <taxon>Eukaryota</taxon>
        <taxon>Metazoa</taxon>
        <taxon>Chordata</taxon>
        <taxon>Craniata</taxon>
        <taxon>Vertebrata</taxon>
        <taxon>Euteleostomi</taxon>
        <taxon>Mammalia</taxon>
        <taxon>Eutheria</taxon>
        <taxon>Euarchontoglires</taxon>
        <taxon>Glires</taxon>
        <taxon>Rodentia</taxon>
        <taxon>Myomorpha</taxon>
        <taxon>Muroidea</taxon>
        <taxon>Muridae</taxon>
        <taxon>Murinae</taxon>
        <taxon>Mus</taxon>
        <taxon>Mus</taxon>
    </lineage>
</organism>
<feature type="chain" id="PRO_0000282987" description="Transmembrane protein 151A">
    <location>
        <begin position="1"/>
        <end position="468"/>
    </location>
</feature>
<feature type="transmembrane region" description="Helical" evidence="1">
    <location>
        <begin position="45"/>
        <end position="65"/>
    </location>
</feature>
<feature type="transmembrane region" description="Helical" evidence="1">
    <location>
        <begin position="98"/>
        <end position="118"/>
    </location>
</feature>
<feature type="region of interest" description="Disordered" evidence="2">
    <location>
        <begin position="1"/>
        <end position="20"/>
    </location>
</feature>
<feature type="region of interest" description="Disordered" evidence="2">
    <location>
        <begin position="384"/>
        <end position="438"/>
    </location>
</feature>
<accession>Q6GQT5</accession>
<comment type="subcellular location">
    <subcellularLocation>
        <location evidence="3">Endoplasmic reticulum membrane</location>
        <topology evidence="4">Multi-pass membrane protein</topology>
    </subcellularLocation>
    <subcellularLocation>
        <location evidence="3">Cell projection</location>
        <location evidence="3">Axon</location>
    </subcellularLocation>
    <subcellularLocation>
        <location evidence="3">Cell projection</location>
        <location evidence="3">Dendrite</location>
    </subcellularLocation>
</comment>
<comment type="tissue specificity">
    <text evidence="3">Highly expressed in the central nervous system (CNS) including the cerebral cortex, hippocampus, spinal cord, brainstem, and thalamus. Expression is relatively low during postnatal stages but highly expressed at postnatal day 14 (P14), and declined in adulthood. Also expressed in the stomach, heart, liver, spleen, lung, kidney, and muscle.</text>
</comment>
<comment type="disruption phenotype">
    <text evidence="3">Knockout mice exhibited frequent spontaneous dyskinesia attacks.</text>
</comment>
<comment type="similarity">
    <text evidence="4">Belongs to the TMEM151 family.</text>
</comment>
<keyword id="KW-0966">Cell projection</keyword>
<keyword id="KW-0903">Direct protein sequencing</keyword>
<keyword id="KW-0256">Endoplasmic reticulum</keyword>
<keyword id="KW-0472">Membrane</keyword>
<keyword id="KW-1185">Reference proteome</keyword>
<keyword id="KW-0812">Transmembrane</keyword>
<keyword id="KW-1133">Transmembrane helix</keyword>